<accession>Q5M140</accession>
<protein>
    <recommendedName>
        <fullName evidence="1">Ribosome-recycling factor</fullName>
        <shortName evidence="1">RRF</shortName>
    </recommendedName>
    <alternativeName>
        <fullName evidence="1">Ribosome-releasing factor</fullName>
    </alternativeName>
</protein>
<name>RRF_STRT1</name>
<proteinExistence type="inferred from homology"/>
<keyword id="KW-0963">Cytoplasm</keyword>
<keyword id="KW-0648">Protein biosynthesis</keyword>
<comment type="function">
    <text evidence="1">Responsible for the release of ribosomes from messenger RNA at the termination of protein biosynthesis. May increase the efficiency of translation by recycling ribosomes from one round of translation to another.</text>
</comment>
<comment type="subcellular location">
    <subcellularLocation>
        <location evidence="1">Cytoplasm</location>
    </subcellularLocation>
</comment>
<comment type="similarity">
    <text evidence="1">Belongs to the RRF family.</text>
</comment>
<sequence>MTNTIIEKAKERFAHTHESLAREFGAIRAGRANASLLDRITVEYYGAPTPLNQLASITVPEARVLLISPFDKGSIADIERAINESDLGINPANDGSVIRLVIPALTEETRKELAKEVKKVGENAKIAIRNIRRDAMDEAKKQEKEKEITEDQLKTLEKDIQKATDDAVNKIDSMIAEKEKELLTV</sequence>
<evidence type="ECO:0000255" key="1">
    <source>
        <dbReference type="HAMAP-Rule" id="MF_00040"/>
    </source>
</evidence>
<gene>
    <name evidence="1" type="primary">frr</name>
    <name type="ordered locus">str0439</name>
</gene>
<reference key="1">
    <citation type="journal article" date="2004" name="Nat. Biotechnol.">
        <title>Complete sequence and comparative genome analysis of the dairy bacterium Streptococcus thermophilus.</title>
        <authorList>
            <person name="Bolotin A."/>
            <person name="Quinquis B."/>
            <person name="Renault P."/>
            <person name="Sorokin A."/>
            <person name="Ehrlich S.D."/>
            <person name="Kulakauskas S."/>
            <person name="Lapidus A."/>
            <person name="Goltsman E."/>
            <person name="Mazur M."/>
            <person name="Pusch G.D."/>
            <person name="Fonstein M."/>
            <person name="Overbeek R."/>
            <person name="Kyprides N."/>
            <person name="Purnelle B."/>
            <person name="Prozzi D."/>
            <person name="Ngui K."/>
            <person name="Masuy D."/>
            <person name="Hancy F."/>
            <person name="Burteau S."/>
            <person name="Boutry M."/>
            <person name="Delcour J."/>
            <person name="Goffeau A."/>
            <person name="Hols P."/>
        </authorList>
    </citation>
    <scope>NUCLEOTIDE SEQUENCE [LARGE SCALE GENOMIC DNA]</scope>
    <source>
        <strain>CNRZ 1066</strain>
    </source>
</reference>
<dbReference type="EMBL" id="CP000024">
    <property type="protein sequence ID" value="AAV62040.1"/>
    <property type="molecule type" value="Genomic_DNA"/>
</dbReference>
<dbReference type="RefSeq" id="WP_011225565.1">
    <property type="nucleotide sequence ID" value="NC_006449.1"/>
</dbReference>
<dbReference type="SMR" id="Q5M140"/>
<dbReference type="GeneID" id="66898353"/>
<dbReference type="KEGG" id="stc:str0439"/>
<dbReference type="HOGENOM" id="CLU_073981_2_0_9"/>
<dbReference type="GO" id="GO:0005737">
    <property type="term" value="C:cytoplasm"/>
    <property type="evidence" value="ECO:0007669"/>
    <property type="project" value="UniProtKB-SubCell"/>
</dbReference>
<dbReference type="GO" id="GO:0043023">
    <property type="term" value="F:ribosomal large subunit binding"/>
    <property type="evidence" value="ECO:0007669"/>
    <property type="project" value="TreeGrafter"/>
</dbReference>
<dbReference type="GO" id="GO:0006415">
    <property type="term" value="P:translational termination"/>
    <property type="evidence" value="ECO:0007669"/>
    <property type="project" value="UniProtKB-UniRule"/>
</dbReference>
<dbReference type="CDD" id="cd00520">
    <property type="entry name" value="RRF"/>
    <property type="match status" value="1"/>
</dbReference>
<dbReference type="FunFam" id="1.10.132.20:FF:000001">
    <property type="entry name" value="Ribosome-recycling factor"/>
    <property type="match status" value="1"/>
</dbReference>
<dbReference type="FunFam" id="3.30.1360.40:FF:000001">
    <property type="entry name" value="Ribosome-recycling factor"/>
    <property type="match status" value="1"/>
</dbReference>
<dbReference type="Gene3D" id="3.30.1360.40">
    <property type="match status" value="1"/>
</dbReference>
<dbReference type="Gene3D" id="1.10.132.20">
    <property type="entry name" value="Ribosome-recycling factor"/>
    <property type="match status" value="1"/>
</dbReference>
<dbReference type="HAMAP" id="MF_00040">
    <property type="entry name" value="RRF"/>
    <property type="match status" value="1"/>
</dbReference>
<dbReference type="InterPro" id="IPR002661">
    <property type="entry name" value="Ribosome_recyc_fac"/>
</dbReference>
<dbReference type="InterPro" id="IPR023584">
    <property type="entry name" value="Ribosome_recyc_fac_dom"/>
</dbReference>
<dbReference type="InterPro" id="IPR036191">
    <property type="entry name" value="RRF_sf"/>
</dbReference>
<dbReference type="NCBIfam" id="TIGR00496">
    <property type="entry name" value="frr"/>
    <property type="match status" value="1"/>
</dbReference>
<dbReference type="PANTHER" id="PTHR20982:SF3">
    <property type="entry name" value="MITOCHONDRIAL RIBOSOME RECYCLING FACTOR PSEUDO 1"/>
    <property type="match status" value="1"/>
</dbReference>
<dbReference type="PANTHER" id="PTHR20982">
    <property type="entry name" value="RIBOSOME RECYCLING FACTOR"/>
    <property type="match status" value="1"/>
</dbReference>
<dbReference type="Pfam" id="PF01765">
    <property type="entry name" value="RRF"/>
    <property type="match status" value="1"/>
</dbReference>
<dbReference type="SUPFAM" id="SSF55194">
    <property type="entry name" value="Ribosome recycling factor, RRF"/>
    <property type="match status" value="1"/>
</dbReference>
<feature type="chain" id="PRO_0000167558" description="Ribosome-recycling factor">
    <location>
        <begin position="1"/>
        <end position="185"/>
    </location>
</feature>
<organism>
    <name type="scientific">Streptococcus thermophilus (strain CNRZ 1066)</name>
    <dbReference type="NCBI Taxonomy" id="299768"/>
    <lineage>
        <taxon>Bacteria</taxon>
        <taxon>Bacillati</taxon>
        <taxon>Bacillota</taxon>
        <taxon>Bacilli</taxon>
        <taxon>Lactobacillales</taxon>
        <taxon>Streptococcaceae</taxon>
        <taxon>Streptococcus</taxon>
    </lineage>
</organism>